<reference key="1">
    <citation type="journal article" date="1995" name="Science">
        <title>Whole-genome random sequencing and assembly of Haemophilus influenzae Rd.</title>
        <authorList>
            <person name="Fleischmann R.D."/>
            <person name="Adams M.D."/>
            <person name="White O."/>
            <person name="Clayton R.A."/>
            <person name="Kirkness E.F."/>
            <person name="Kerlavage A.R."/>
            <person name="Bult C.J."/>
            <person name="Tomb J.-F."/>
            <person name="Dougherty B.A."/>
            <person name="Merrick J.M."/>
            <person name="McKenney K."/>
            <person name="Sutton G.G."/>
            <person name="FitzHugh W."/>
            <person name="Fields C.A."/>
            <person name="Gocayne J.D."/>
            <person name="Scott J.D."/>
            <person name="Shirley R."/>
            <person name="Liu L.-I."/>
            <person name="Glodek A."/>
            <person name="Kelley J.M."/>
            <person name="Weidman J.F."/>
            <person name="Phillips C.A."/>
            <person name="Spriggs T."/>
            <person name="Hedblom E."/>
            <person name="Cotton M.D."/>
            <person name="Utterback T.R."/>
            <person name="Hanna M.C."/>
            <person name="Nguyen D.T."/>
            <person name="Saudek D.M."/>
            <person name="Brandon R.C."/>
            <person name="Fine L.D."/>
            <person name="Fritchman J.L."/>
            <person name="Fuhrmann J.L."/>
            <person name="Geoghagen N.S.M."/>
            <person name="Gnehm C.L."/>
            <person name="McDonald L.A."/>
            <person name="Small K.V."/>
            <person name="Fraser C.M."/>
            <person name="Smith H.O."/>
            <person name="Venter J.C."/>
        </authorList>
    </citation>
    <scope>NUCLEOTIDE SEQUENCE [LARGE SCALE GENOMIC DNA]</scope>
    <source>
        <strain>ATCC 51907 / DSM 11121 / KW20 / Rd</strain>
    </source>
</reference>
<dbReference type="EMBL" id="L42023">
    <property type="protein sequence ID" value="AAC22141.1"/>
    <property type="molecule type" value="Genomic_DNA"/>
</dbReference>
<dbReference type="PIR" id="H64071">
    <property type="entry name" value="H64071"/>
</dbReference>
<dbReference type="RefSeq" id="NP_438643.1">
    <property type="nucleotide sequence ID" value="NC_000907.1"/>
</dbReference>
<dbReference type="SMR" id="P43720"/>
<dbReference type="STRING" id="71421.HI_0483"/>
<dbReference type="EnsemblBacteria" id="AAC22141">
    <property type="protein sequence ID" value="AAC22141"/>
    <property type="gene ID" value="HI_0483"/>
</dbReference>
<dbReference type="KEGG" id="hin:HI_0483"/>
<dbReference type="PATRIC" id="fig|71421.8.peg.502"/>
<dbReference type="eggNOG" id="COG0711">
    <property type="taxonomic scope" value="Bacteria"/>
</dbReference>
<dbReference type="HOGENOM" id="CLU_079215_4_5_6"/>
<dbReference type="OrthoDB" id="9788020at2"/>
<dbReference type="PhylomeDB" id="P43720"/>
<dbReference type="BioCyc" id="HINF71421:G1GJ1-498-MONOMER"/>
<dbReference type="Proteomes" id="UP000000579">
    <property type="component" value="Chromosome"/>
</dbReference>
<dbReference type="GO" id="GO:0005886">
    <property type="term" value="C:plasma membrane"/>
    <property type="evidence" value="ECO:0007669"/>
    <property type="project" value="UniProtKB-SubCell"/>
</dbReference>
<dbReference type="GO" id="GO:0045259">
    <property type="term" value="C:proton-transporting ATP synthase complex"/>
    <property type="evidence" value="ECO:0007669"/>
    <property type="project" value="UniProtKB-KW"/>
</dbReference>
<dbReference type="GO" id="GO:0046933">
    <property type="term" value="F:proton-transporting ATP synthase activity, rotational mechanism"/>
    <property type="evidence" value="ECO:0007669"/>
    <property type="project" value="UniProtKB-UniRule"/>
</dbReference>
<dbReference type="CDD" id="cd06503">
    <property type="entry name" value="ATP-synt_Fo_b"/>
    <property type="match status" value="1"/>
</dbReference>
<dbReference type="FunFam" id="1.20.5.620:FF:000001">
    <property type="entry name" value="ATP synthase subunit b"/>
    <property type="match status" value="1"/>
</dbReference>
<dbReference type="Gene3D" id="1.20.5.620">
    <property type="entry name" value="F1F0 ATP synthase subunit B, membrane domain"/>
    <property type="match status" value="1"/>
</dbReference>
<dbReference type="HAMAP" id="MF_01398">
    <property type="entry name" value="ATP_synth_b_bprime"/>
    <property type="match status" value="1"/>
</dbReference>
<dbReference type="InterPro" id="IPR028987">
    <property type="entry name" value="ATP_synth_B-like_membr_sf"/>
</dbReference>
<dbReference type="InterPro" id="IPR002146">
    <property type="entry name" value="ATP_synth_b/b'su_bac/chlpt"/>
</dbReference>
<dbReference type="InterPro" id="IPR005864">
    <property type="entry name" value="ATP_synth_F0_bsu_bac"/>
</dbReference>
<dbReference type="InterPro" id="IPR050059">
    <property type="entry name" value="ATP_synthase_B_chain"/>
</dbReference>
<dbReference type="NCBIfam" id="TIGR01144">
    <property type="entry name" value="ATP_synt_b"/>
    <property type="match status" value="1"/>
</dbReference>
<dbReference type="NCBIfam" id="NF004411">
    <property type="entry name" value="PRK05759.1-2"/>
    <property type="match status" value="1"/>
</dbReference>
<dbReference type="NCBIfam" id="NF004413">
    <property type="entry name" value="PRK05759.1-4"/>
    <property type="match status" value="1"/>
</dbReference>
<dbReference type="PANTHER" id="PTHR33445:SF1">
    <property type="entry name" value="ATP SYNTHASE SUBUNIT B"/>
    <property type="match status" value="1"/>
</dbReference>
<dbReference type="PANTHER" id="PTHR33445">
    <property type="entry name" value="ATP SYNTHASE SUBUNIT B', CHLOROPLASTIC"/>
    <property type="match status" value="1"/>
</dbReference>
<dbReference type="Pfam" id="PF00430">
    <property type="entry name" value="ATP-synt_B"/>
    <property type="match status" value="1"/>
</dbReference>
<dbReference type="SUPFAM" id="SSF81573">
    <property type="entry name" value="F1F0 ATP synthase subunit B, membrane domain"/>
    <property type="match status" value="1"/>
</dbReference>
<feature type="chain" id="PRO_0000082375" description="ATP synthase subunit b">
    <location>
        <begin position="1"/>
        <end position="156"/>
    </location>
</feature>
<feature type="transmembrane region" description="Helical" evidence="1">
    <location>
        <begin position="11"/>
        <end position="31"/>
    </location>
</feature>
<keyword id="KW-0066">ATP synthesis</keyword>
<keyword id="KW-0997">Cell inner membrane</keyword>
<keyword id="KW-1003">Cell membrane</keyword>
<keyword id="KW-0138">CF(0)</keyword>
<keyword id="KW-0375">Hydrogen ion transport</keyword>
<keyword id="KW-0406">Ion transport</keyword>
<keyword id="KW-0472">Membrane</keyword>
<keyword id="KW-1185">Reference proteome</keyword>
<keyword id="KW-0812">Transmembrane</keyword>
<keyword id="KW-1133">Transmembrane helix</keyword>
<keyword id="KW-0813">Transport</keyword>
<protein>
    <recommendedName>
        <fullName evidence="1">ATP synthase subunit b</fullName>
    </recommendedName>
    <alternativeName>
        <fullName evidence="1">ATP synthase F(0) sector subunit b</fullName>
    </alternativeName>
    <alternativeName>
        <fullName evidence="1">ATPase subunit I</fullName>
    </alternativeName>
    <alternativeName>
        <fullName evidence="1">F-type ATPase subunit b</fullName>
        <shortName evidence="1">F-ATPase subunit b</shortName>
    </alternativeName>
</protein>
<proteinExistence type="inferred from homology"/>
<gene>
    <name evidence="1" type="primary">atpF</name>
    <name type="ordered locus">HI_0483</name>
</gene>
<name>ATPF_HAEIN</name>
<sequence length="156" mass="17172">MNLNATLIGQLIAFALFVWFCMKFVWPPIINAIETRQSQIANALASAEAAKKEQADTKNLVEQELSAAKLQAQDILDAANKRRNEVLDEVKAEAEELKAKIIAQGYAEVEAERKRVQEELRLKVASLAVAGAEKIVGRSIDEAANNDIIDKLVAEL</sequence>
<accession>P43720</accession>
<comment type="function">
    <text evidence="1">F(1)F(0) ATP synthase produces ATP from ADP in the presence of a proton or sodium gradient. F-type ATPases consist of two structural domains, F(1) containing the extramembraneous catalytic core and F(0) containing the membrane proton channel, linked together by a central stalk and a peripheral stalk. During catalysis, ATP synthesis in the catalytic domain of F(1) is coupled via a rotary mechanism of the central stalk subunits to proton translocation.</text>
</comment>
<comment type="function">
    <text evidence="1">Component of the F(0) channel, it forms part of the peripheral stalk, linking F(1) to F(0).</text>
</comment>
<comment type="subunit">
    <text evidence="1">F-type ATPases have 2 components, F(1) - the catalytic core - and F(0) - the membrane proton channel. F(1) has five subunits: alpha(3), beta(3), gamma(1), delta(1), epsilon(1). F(0) has three main subunits: a(1), b(2) and c(10-14). The alpha and beta chains form an alternating ring which encloses part of the gamma chain. F(1) is attached to F(0) by a central stalk formed by the gamma and epsilon chains, while a peripheral stalk is formed by the delta and b chains.</text>
</comment>
<comment type="subcellular location">
    <subcellularLocation>
        <location evidence="1">Cell inner membrane</location>
        <topology evidence="1">Single-pass membrane protein</topology>
    </subcellularLocation>
</comment>
<comment type="similarity">
    <text evidence="1">Belongs to the ATPase B chain family.</text>
</comment>
<organism>
    <name type="scientific">Haemophilus influenzae (strain ATCC 51907 / DSM 11121 / KW20 / Rd)</name>
    <dbReference type="NCBI Taxonomy" id="71421"/>
    <lineage>
        <taxon>Bacteria</taxon>
        <taxon>Pseudomonadati</taxon>
        <taxon>Pseudomonadota</taxon>
        <taxon>Gammaproteobacteria</taxon>
        <taxon>Pasteurellales</taxon>
        <taxon>Pasteurellaceae</taxon>
        <taxon>Haemophilus</taxon>
    </lineage>
</organism>
<evidence type="ECO:0000255" key="1">
    <source>
        <dbReference type="HAMAP-Rule" id="MF_01398"/>
    </source>
</evidence>